<evidence type="ECO:0000250" key="1"/>
<evidence type="ECO:0000305" key="2"/>
<sequence length="115" mass="13130">MSNIIKQLEQEQMKQNVPSFRPGDTVEVKVWVVEGTKKRLQAFEGVVIAIRNRGLHSAFTVRKISNGEGVERVFQTHSPVVDSIAVKRRGAVRKAKLYYLRERTGKAARIKERLN</sequence>
<name>RL19_SALTI</name>
<keyword id="KW-0687">Ribonucleoprotein</keyword>
<keyword id="KW-0689">Ribosomal protein</keyword>
<feature type="initiator methionine" description="Removed" evidence="1">
    <location>
        <position position="1"/>
    </location>
</feature>
<feature type="chain" id="PRO_0000163522" description="Large ribosomal subunit protein bL19">
    <location>
        <begin position="2"/>
        <end position="115"/>
    </location>
</feature>
<comment type="function">
    <text evidence="1">This protein is located at the 30S-50S ribosomal subunit interface and may play a role in the structure and function of the aminoacyl-tRNA binding site.</text>
</comment>
<comment type="similarity">
    <text evidence="2">Belongs to the bacterial ribosomal protein bL19 family.</text>
</comment>
<gene>
    <name type="primary">rplS</name>
    <name type="ordered locus">STY2860</name>
    <name type="ordered locus">t2628</name>
</gene>
<accession>P0A2A2</accession>
<accession>P36240</accession>
<protein>
    <recommendedName>
        <fullName evidence="2">Large ribosomal subunit protein bL19</fullName>
    </recommendedName>
    <alternativeName>
        <fullName>50S ribosomal protein L19</fullName>
    </alternativeName>
</protein>
<proteinExistence type="inferred from homology"/>
<organism>
    <name type="scientific">Salmonella typhi</name>
    <dbReference type="NCBI Taxonomy" id="90370"/>
    <lineage>
        <taxon>Bacteria</taxon>
        <taxon>Pseudomonadati</taxon>
        <taxon>Pseudomonadota</taxon>
        <taxon>Gammaproteobacteria</taxon>
        <taxon>Enterobacterales</taxon>
        <taxon>Enterobacteriaceae</taxon>
        <taxon>Salmonella</taxon>
    </lineage>
</organism>
<dbReference type="EMBL" id="AL513382">
    <property type="protein sequence ID" value="CAD05852.1"/>
    <property type="molecule type" value="Genomic_DNA"/>
</dbReference>
<dbReference type="EMBL" id="AE014613">
    <property type="protein sequence ID" value="AAO70199.1"/>
    <property type="molecule type" value="Genomic_DNA"/>
</dbReference>
<dbReference type="RefSeq" id="NP_457143.1">
    <property type="nucleotide sequence ID" value="NC_003198.1"/>
</dbReference>
<dbReference type="RefSeq" id="WP_000065257.1">
    <property type="nucleotide sequence ID" value="NZ_WSUR01000036.1"/>
</dbReference>
<dbReference type="SMR" id="P0A2A2"/>
<dbReference type="STRING" id="220341.gene:17586756"/>
<dbReference type="KEGG" id="stt:t2628"/>
<dbReference type="KEGG" id="sty:STY2860"/>
<dbReference type="PATRIC" id="fig|220341.7.peg.2910"/>
<dbReference type="eggNOG" id="COG0335">
    <property type="taxonomic scope" value="Bacteria"/>
</dbReference>
<dbReference type="HOGENOM" id="CLU_103507_2_1_6"/>
<dbReference type="OMA" id="TITVYYE"/>
<dbReference type="OrthoDB" id="9803541at2"/>
<dbReference type="Proteomes" id="UP000000541">
    <property type="component" value="Chromosome"/>
</dbReference>
<dbReference type="Proteomes" id="UP000002670">
    <property type="component" value="Chromosome"/>
</dbReference>
<dbReference type="GO" id="GO:0022625">
    <property type="term" value="C:cytosolic large ribosomal subunit"/>
    <property type="evidence" value="ECO:0007669"/>
    <property type="project" value="TreeGrafter"/>
</dbReference>
<dbReference type="GO" id="GO:0003735">
    <property type="term" value="F:structural constituent of ribosome"/>
    <property type="evidence" value="ECO:0007669"/>
    <property type="project" value="InterPro"/>
</dbReference>
<dbReference type="GO" id="GO:0006412">
    <property type="term" value="P:translation"/>
    <property type="evidence" value="ECO:0007669"/>
    <property type="project" value="UniProtKB-UniRule"/>
</dbReference>
<dbReference type="FunFam" id="2.30.30.790:FF:000001">
    <property type="entry name" value="50S ribosomal protein L19"/>
    <property type="match status" value="1"/>
</dbReference>
<dbReference type="Gene3D" id="2.30.30.790">
    <property type="match status" value="1"/>
</dbReference>
<dbReference type="HAMAP" id="MF_00402">
    <property type="entry name" value="Ribosomal_bL19"/>
    <property type="match status" value="1"/>
</dbReference>
<dbReference type="InterPro" id="IPR001857">
    <property type="entry name" value="Ribosomal_bL19"/>
</dbReference>
<dbReference type="InterPro" id="IPR018257">
    <property type="entry name" value="Ribosomal_bL19_CS"/>
</dbReference>
<dbReference type="InterPro" id="IPR038657">
    <property type="entry name" value="Ribosomal_bL19_sf"/>
</dbReference>
<dbReference type="InterPro" id="IPR008991">
    <property type="entry name" value="Translation_prot_SH3-like_sf"/>
</dbReference>
<dbReference type="NCBIfam" id="TIGR01024">
    <property type="entry name" value="rplS_bact"/>
    <property type="match status" value="1"/>
</dbReference>
<dbReference type="PANTHER" id="PTHR15680:SF9">
    <property type="entry name" value="LARGE RIBOSOMAL SUBUNIT PROTEIN BL19M"/>
    <property type="match status" value="1"/>
</dbReference>
<dbReference type="PANTHER" id="PTHR15680">
    <property type="entry name" value="RIBOSOMAL PROTEIN L19"/>
    <property type="match status" value="1"/>
</dbReference>
<dbReference type="Pfam" id="PF01245">
    <property type="entry name" value="Ribosomal_L19"/>
    <property type="match status" value="1"/>
</dbReference>
<dbReference type="PIRSF" id="PIRSF002191">
    <property type="entry name" value="Ribosomal_L19"/>
    <property type="match status" value="1"/>
</dbReference>
<dbReference type="PRINTS" id="PR00061">
    <property type="entry name" value="RIBOSOMALL19"/>
</dbReference>
<dbReference type="SUPFAM" id="SSF50104">
    <property type="entry name" value="Translation proteins SH3-like domain"/>
    <property type="match status" value="1"/>
</dbReference>
<dbReference type="PROSITE" id="PS01015">
    <property type="entry name" value="RIBOSOMAL_L19"/>
    <property type="match status" value="1"/>
</dbReference>
<reference key="1">
    <citation type="journal article" date="2001" name="Nature">
        <title>Complete genome sequence of a multiple drug resistant Salmonella enterica serovar Typhi CT18.</title>
        <authorList>
            <person name="Parkhill J."/>
            <person name="Dougan G."/>
            <person name="James K.D."/>
            <person name="Thomson N.R."/>
            <person name="Pickard D."/>
            <person name="Wain J."/>
            <person name="Churcher C.M."/>
            <person name="Mungall K.L."/>
            <person name="Bentley S.D."/>
            <person name="Holden M.T.G."/>
            <person name="Sebaihia M."/>
            <person name="Baker S."/>
            <person name="Basham D."/>
            <person name="Brooks K."/>
            <person name="Chillingworth T."/>
            <person name="Connerton P."/>
            <person name="Cronin A."/>
            <person name="Davis P."/>
            <person name="Davies R.M."/>
            <person name="Dowd L."/>
            <person name="White N."/>
            <person name="Farrar J."/>
            <person name="Feltwell T."/>
            <person name="Hamlin N."/>
            <person name="Haque A."/>
            <person name="Hien T.T."/>
            <person name="Holroyd S."/>
            <person name="Jagels K."/>
            <person name="Krogh A."/>
            <person name="Larsen T.S."/>
            <person name="Leather S."/>
            <person name="Moule S."/>
            <person name="O'Gaora P."/>
            <person name="Parry C."/>
            <person name="Quail M.A."/>
            <person name="Rutherford K.M."/>
            <person name="Simmonds M."/>
            <person name="Skelton J."/>
            <person name="Stevens K."/>
            <person name="Whitehead S."/>
            <person name="Barrell B.G."/>
        </authorList>
    </citation>
    <scope>NUCLEOTIDE SEQUENCE [LARGE SCALE GENOMIC DNA]</scope>
    <source>
        <strain>CT18</strain>
    </source>
</reference>
<reference key="2">
    <citation type="journal article" date="2003" name="J. Bacteriol.">
        <title>Comparative genomics of Salmonella enterica serovar Typhi strains Ty2 and CT18.</title>
        <authorList>
            <person name="Deng W."/>
            <person name="Liou S.-R."/>
            <person name="Plunkett G. III"/>
            <person name="Mayhew G.F."/>
            <person name="Rose D.J."/>
            <person name="Burland V."/>
            <person name="Kodoyianni V."/>
            <person name="Schwartz D.C."/>
            <person name="Blattner F.R."/>
        </authorList>
    </citation>
    <scope>NUCLEOTIDE SEQUENCE [LARGE SCALE GENOMIC DNA]</scope>
    <source>
        <strain>ATCC 700931 / Ty2</strain>
    </source>
</reference>